<accession>O13954</accession>
<sequence>MSSNSAVQSKSPLLPKENPPVKAFPDNIQVSSSLLSFLIYILYTFSISGLSTFVITKYYIRPQWLYTLALRRALIKLYYNFMDGFNKRTDTLQHRVDDKKILKTIEKWSCIKEKLRRVANITEQEQQCIPAESSLDLSIQAMKGVVNAELYQFGSQISGSLEFDTPIGNLQKQIVSLKSKMINI</sequence>
<comment type="subcellular location">
    <subcellularLocation>
        <location evidence="2">Membrane</location>
        <topology evidence="2">Single-pass membrane protein</topology>
    </subcellularLocation>
</comment>
<protein>
    <recommendedName>
        <fullName>Uncharacterized protein C23H4.13c</fullName>
    </recommendedName>
</protein>
<reference key="1">
    <citation type="journal article" date="2002" name="Nature">
        <title>The genome sequence of Schizosaccharomyces pombe.</title>
        <authorList>
            <person name="Wood V."/>
            <person name="Gwilliam R."/>
            <person name="Rajandream M.A."/>
            <person name="Lyne M.H."/>
            <person name="Lyne R."/>
            <person name="Stewart A."/>
            <person name="Sgouros J.G."/>
            <person name="Peat N."/>
            <person name="Hayles J."/>
            <person name="Baker S.G."/>
            <person name="Basham D."/>
            <person name="Bowman S."/>
            <person name="Brooks K."/>
            <person name="Brown D."/>
            <person name="Brown S."/>
            <person name="Chillingworth T."/>
            <person name="Churcher C.M."/>
            <person name="Collins M."/>
            <person name="Connor R."/>
            <person name="Cronin A."/>
            <person name="Davis P."/>
            <person name="Feltwell T."/>
            <person name="Fraser A."/>
            <person name="Gentles S."/>
            <person name="Goble A."/>
            <person name="Hamlin N."/>
            <person name="Harris D.E."/>
            <person name="Hidalgo J."/>
            <person name="Hodgson G."/>
            <person name="Holroyd S."/>
            <person name="Hornsby T."/>
            <person name="Howarth S."/>
            <person name="Huckle E.J."/>
            <person name="Hunt S."/>
            <person name="Jagels K."/>
            <person name="James K.D."/>
            <person name="Jones L."/>
            <person name="Jones M."/>
            <person name="Leather S."/>
            <person name="McDonald S."/>
            <person name="McLean J."/>
            <person name="Mooney P."/>
            <person name="Moule S."/>
            <person name="Mungall K.L."/>
            <person name="Murphy L.D."/>
            <person name="Niblett D."/>
            <person name="Odell C."/>
            <person name="Oliver K."/>
            <person name="O'Neil S."/>
            <person name="Pearson D."/>
            <person name="Quail M.A."/>
            <person name="Rabbinowitsch E."/>
            <person name="Rutherford K.M."/>
            <person name="Rutter S."/>
            <person name="Saunders D."/>
            <person name="Seeger K."/>
            <person name="Sharp S."/>
            <person name="Skelton J."/>
            <person name="Simmonds M.N."/>
            <person name="Squares R."/>
            <person name="Squares S."/>
            <person name="Stevens K."/>
            <person name="Taylor K."/>
            <person name="Taylor R.G."/>
            <person name="Tivey A."/>
            <person name="Walsh S.V."/>
            <person name="Warren T."/>
            <person name="Whitehead S."/>
            <person name="Woodward J.R."/>
            <person name="Volckaert G."/>
            <person name="Aert R."/>
            <person name="Robben J."/>
            <person name="Grymonprez B."/>
            <person name="Weltjens I."/>
            <person name="Vanstreels E."/>
            <person name="Rieger M."/>
            <person name="Schaefer M."/>
            <person name="Mueller-Auer S."/>
            <person name="Gabel C."/>
            <person name="Fuchs M."/>
            <person name="Duesterhoeft A."/>
            <person name="Fritzc C."/>
            <person name="Holzer E."/>
            <person name="Moestl D."/>
            <person name="Hilbert H."/>
            <person name="Borzym K."/>
            <person name="Langer I."/>
            <person name="Beck A."/>
            <person name="Lehrach H."/>
            <person name="Reinhardt R."/>
            <person name="Pohl T.M."/>
            <person name="Eger P."/>
            <person name="Zimmermann W."/>
            <person name="Wedler H."/>
            <person name="Wambutt R."/>
            <person name="Purnelle B."/>
            <person name="Goffeau A."/>
            <person name="Cadieu E."/>
            <person name="Dreano S."/>
            <person name="Gloux S."/>
            <person name="Lelaure V."/>
            <person name="Mottier S."/>
            <person name="Galibert F."/>
            <person name="Aves S.J."/>
            <person name="Xiang Z."/>
            <person name="Hunt C."/>
            <person name="Moore K."/>
            <person name="Hurst S.M."/>
            <person name="Lucas M."/>
            <person name="Rochet M."/>
            <person name="Gaillardin C."/>
            <person name="Tallada V.A."/>
            <person name="Garzon A."/>
            <person name="Thode G."/>
            <person name="Daga R.R."/>
            <person name="Cruzado L."/>
            <person name="Jimenez J."/>
            <person name="Sanchez M."/>
            <person name="del Rey F."/>
            <person name="Benito J."/>
            <person name="Dominguez A."/>
            <person name="Revuelta J.L."/>
            <person name="Moreno S."/>
            <person name="Armstrong J."/>
            <person name="Forsburg S.L."/>
            <person name="Cerutti L."/>
            <person name="Lowe T."/>
            <person name="McCombie W.R."/>
            <person name="Paulsen I."/>
            <person name="Potashkin J."/>
            <person name="Shpakovski G.V."/>
            <person name="Ussery D."/>
            <person name="Barrell B.G."/>
            <person name="Nurse P."/>
        </authorList>
    </citation>
    <scope>NUCLEOTIDE SEQUENCE [LARGE SCALE GENOMIC DNA]</scope>
    <source>
        <strain>972 / ATCC 24843</strain>
    </source>
</reference>
<evidence type="ECO:0000255" key="1"/>
<evidence type="ECO:0000305" key="2"/>
<dbReference type="EMBL" id="CU329670">
    <property type="protein sequence ID" value="CAB11667.1"/>
    <property type="molecule type" value="Genomic_DNA"/>
</dbReference>
<dbReference type="PIR" id="T38315">
    <property type="entry name" value="T38315"/>
</dbReference>
<dbReference type="RefSeq" id="NP_593393.1">
    <property type="nucleotide sequence ID" value="NM_001018825.2"/>
</dbReference>
<dbReference type="SMR" id="O13954"/>
<dbReference type="BioGRID" id="278383">
    <property type="interactions" value="7"/>
</dbReference>
<dbReference type="iPTMnet" id="O13954"/>
<dbReference type="PaxDb" id="4896-SPAC23H4.13c.1"/>
<dbReference type="EnsemblFungi" id="SPAC23H4.13c.1">
    <property type="protein sequence ID" value="SPAC23H4.13c.1:pep"/>
    <property type="gene ID" value="SPAC23H4.13c"/>
</dbReference>
<dbReference type="KEGG" id="spo:2541893"/>
<dbReference type="PomBase" id="SPAC23H4.13c"/>
<dbReference type="VEuPathDB" id="FungiDB:SPAC23H4.13c"/>
<dbReference type="HOGENOM" id="CLU_1469039_0_0_1"/>
<dbReference type="InParanoid" id="O13954"/>
<dbReference type="OMA" id="YYVRPRW"/>
<dbReference type="PRO" id="PR:O13954"/>
<dbReference type="Proteomes" id="UP000002485">
    <property type="component" value="Chromosome I"/>
</dbReference>
<dbReference type="GO" id="GO:0005737">
    <property type="term" value="C:cytoplasm"/>
    <property type="evidence" value="ECO:0007005"/>
    <property type="project" value="PomBase"/>
</dbReference>
<dbReference type="GO" id="GO:0005783">
    <property type="term" value="C:endoplasmic reticulum"/>
    <property type="evidence" value="ECO:0007005"/>
    <property type="project" value="PomBase"/>
</dbReference>
<dbReference type="GO" id="GO:0005794">
    <property type="term" value="C:Golgi apparatus"/>
    <property type="evidence" value="ECO:0007005"/>
    <property type="project" value="PomBase"/>
</dbReference>
<dbReference type="GO" id="GO:0016020">
    <property type="term" value="C:membrane"/>
    <property type="evidence" value="ECO:0007669"/>
    <property type="project" value="UniProtKB-SubCell"/>
</dbReference>
<name>YEHD_SCHPO</name>
<gene>
    <name type="ORF">SPAC23H4.13c</name>
</gene>
<organism>
    <name type="scientific">Schizosaccharomyces pombe (strain 972 / ATCC 24843)</name>
    <name type="common">Fission yeast</name>
    <dbReference type="NCBI Taxonomy" id="284812"/>
    <lineage>
        <taxon>Eukaryota</taxon>
        <taxon>Fungi</taxon>
        <taxon>Dikarya</taxon>
        <taxon>Ascomycota</taxon>
        <taxon>Taphrinomycotina</taxon>
        <taxon>Schizosaccharomycetes</taxon>
        <taxon>Schizosaccharomycetales</taxon>
        <taxon>Schizosaccharomycetaceae</taxon>
        <taxon>Schizosaccharomyces</taxon>
    </lineage>
</organism>
<proteinExistence type="predicted"/>
<feature type="chain" id="PRO_0000116718" description="Uncharacterized protein C23H4.13c">
    <location>
        <begin position="1"/>
        <end position="184"/>
    </location>
</feature>
<feature type="transmembrane region" description="Helical" evidence="1">
    <location>
        <begin position="35"/>
        <end position="55"/>
    </location>
</feature>
<keyword id="KW-0472">Membrane</keyword>
<keyword id="KW-1185">Reference proteome</keyword>
<keyword id="KW-0812">Transmembrane</keyword>
<keyword id="KW-1133">Transmembrane helix</keyword>